<proteinExistence type="evidence at protein level"/>
<sequence>MSIVTKALNLVPMVVEQTSRGERAYDIYSRLLKERLIFLVGPIDDHMANVIVAQLLFLEADNPEKDISIYINSPGGVVTAGMAIYDTMQYIKPDVSTICVGQAASMGALLLASGAAGKRYALPNSRVMIHQPLGGFQGQATDIDIHAREILTLRSRLNEILAKHTGQSLETIARDTERDNFKSAVDAQAYGLVDQVLERRPEESIQPS</sequence>
<comment type="function">
    <text evidence="1">Cleaves peptides in various proteins in a process that requires ATP hydrolysis. Has a chymotrypsin-like activity. Plays a major role in the degradation of misfolded proteins.</text>
</comment>
<comment type="catalytic activity">
    <reaction evidence="1">
        <text>Hydrolysis of proteins to small peptides in the presence of ATP and magnesium. alpha-casein is the usual test substrate. In the absence of ATP, only oligopeptides shorter than five residues are hydrolyzed (such as succinyl-Leu-Tyr-|-NHMec, and Leu-Tyr-Leu-|-Tyr-Trp, in which cleavage of the -Tyr-|-Leu- and -Tyr-|-Trp bonds also occurs).</text>
        <dbReference type="EC" id="3.4.21.92"/>
    </reaction>
</comment>
<comment type="subunit">
    <text evidence="1">Fourteen ClpP subunits assemble into 2 heptameric rings which stack back to back to give a disk-like structure with a central cavity, resembling the structure of eukaryotic proteasomes.</text>
</comment>
<comment type="subcellular location">
    <subcellularLocation>
        <location evidence="1">Cytoplasm</location>
    </subcellularLocation>
</comment>
<comment type="similarity">
    <text evidence="1">Belongs to the peptidase S14 family.</text>
</comment>
<keyword id="KW-0002">3D-structure</keyword>
<keyword id="KW-0963">Cytoplasm</keyword>
<keyword id="KW-0378">Hydrolase</keyword>
<keyword id="KW-0645">Protease</keyword>
<keyword id="KW-1185">Reference proteome</keyword>
<keyword id="KW-0720">Serine protease</keyword>
<evidence type="ECO:0000255" key="1">
    <source>
        <dbReference type="HAMAP-Rule" id="MF_00444"/>
    </source>
</evidence>
<evidence type="ECO:0007829" key="2">
    <source>
        <dbReference type="PDB" id="7DFT"/>
    </source>
</evidence>
<protein>
    <recommendedName>
        <fullName evidence="1">ATP-dependent Clp protease proteolytic subunit</fullName>
        <ecNumber evidence="1">3.4.21.92</ecNumber>
    </recommendedName>
    <alternativeName>
        <fullName evidence="1">Endopeptidase Clp</fullName>
    </alternativeName>
</protein>
<organism>
    <name type="scientific">Xanthomonas oryzae pv. oryzae (strain KACC10331 / KXO85)</name>
    <dbReference type="NCBI Taxonomy" id="291331"/>
    <lineage>
        <taxon>Bacteria</taxon>
        <taxon>Pseudomonadati</taxon>
        <taxon>Pseudomonadota</taxon>
        <taxon>Gammaproteobacteria</taxon>
        <taxon>Lysobacterales</taxon>
        <taxon>Lysobacteraceae</taxon>
        <taxon>Xanthomonas</taxon>
    </lineage>
</organism>
<gene>
    <name evidence="1" type="primary">clpP</name>
    <name type="ordered locus">XOO1033</name>
</gene>
<name>CLPP_XANOR</name>
<accession>Q5H434</accession>
<feature type="chain" id="PRO_0000179721" description="ATP-dependent Clp protease proteolytic subunit">
    <location>
        <begin position="1"/>
        <end position="208"/>
    </location>
</feature>
<feature type="active site" description="Nucleophile" evidence="1">
    <location>
        <position position="105"/>
    </location>
</feature>
<feature type="active site" evidence="1">
    <location>
        <position position="130"/>
    </location>
</feature>
<feature type="strand" evidence="2">
    <location>
        <begin position="16"/>
        <end position="18"/>
    </location>
</feature>
<feature type="strand" evidence="2">
    <location>
        <begin position="21"/>
        <end position="23"/>
    </location>
</feature>
<feature type="helix" evidence="2">
    <location>
        <begin position="27"/>
        <end position="33"/>
    </location>
</feature>
<feature type="strand" evidence="2">
    <location>
        <begin position="36"/>
        <end position="43"/>
    </location>
</feature>
<feature type="helix" evidence="2">
    <location>
        <begin position="45"/>
        <end position="61"/>
    </location>
</feature>
<feature type="strand" evidence="2">
    <location>
        <begin position="63"/>
        <end position="65"/>
    </location>
</feature>
<feature type="strand" evidence="2">
    <location>
        <begin position="67"/>
        <end position="73"/>
    </location>
</feature>
<feature type="helix" evidence="2">
    <location>
        <begin position="78"/>
        <end position="90"/>
    </location>
</feature>
<feature type="strand" evidence="2">
    <location>
        <begin position="91"/>
        <end position="93"/>
    </location>
</feature>
<feature type="strand" evidence="2">
    <location>
        <begin position="95"/>
        <end position="104"/>
    </location>
</feature>
<feature type="helix" evidence="2">
    <location>
        <begin position="106"/>
        <end position="112"/>
    </location>
</feature>
<feature type="strand" evidence="2">
    <location>
        <begin position="119"/>
        <end position="121"/>
    </location>
</feature>
<feature type="strand" evidence="2">
    <location>
        <begin position="126"/>
        <end position="128"/>
    </location>
</feature>
<feature type="helix" evidence="2">
    <location>
        <begin position="133"/>
        <end position="135"/>
    </location>
</feature>
<feature type="helix" evidence="2">
    <location>
        <begin position="147"/>
        <end position="165"/>
    </location>
</feature>
<feature type="helix" evidence="2">
    <location>
        <begin position="169"/>
        <end position="175"/>
    </location>
</feature>
<feature type="helix" evidence="2">
    <location>
        <begin position="184"/>
        <end position="190"/>
    </location>
</feature>
<feature type="strand" evidence="2">
    <location>
        <begin position="194"/>
        <end position="196"/>
    </location>
</feature>
<dbReference type="EC" id="3.4.21.92" evidence="1"/>
<dbReference type="EMBL" id="AE013598">
    <property type="protein sequence ID" value="AAW74287.1"/>
    <property type="molecule type" value="Genomic_DNA"/>
</dbReference>
<dbReference type="PDB" id="7DFT">
    <property type="method" value="X-ray"/>
    <property type="resolution" value="1.80 A"/>
    <property type="chains" value="A/B/C/D/E/F/G=1-208"/>
</dbReference>
<dbReference type="PDB" id="7DFU">
    <property type="method" value="X-ray"/>
    <property type="resolution" value="1.90 A"/>
    <property type="chains" value="A/B/C/D/E/F/G=1-208"/>
</dbReference>
<dbReference type="PDBsum" id="7DFT"/>
<dbReference type="PDBsum" id="7DFU"/>
<dbReference type="SMR" id="Q5H434"/>
<dbReference type="STRING" id="291331.XOO1033"/>
<dbReference type="MEROPS" id="S14.001"/>
<dbReference type="KEGG" id="xoo:XOO1033"/>
<dbReference type="HOGENOM" id="CLU_058707_3_2_6"/>
<dbReference type="Proteomes" id="UP000006735">
    <property type="component" value="Chromosome"/>
</dbReference>
<dbReference type="GO" id="GO:0005737">
    <property type="term" value="C:cytoplasm"/>
    <property type="evidence" value="ECO:0007669"/>
    <property type="project" value="UniProtKB-SubCell"/>
</dbReference>
<dbReference type="GO" id="GO:0009368">
    <property type="term" value="C:endopeptidase Clp complex"/>
    <property type="evidence" value="ECO:0007669"/>
    <property type="project" value="TreeGrafter"/>
</dbReference>
<dbReference type="GO" id="GO:0004176">
    <property type="term" value="F:ATP-dependent peptidase activity"/>
    <property type="evidence" value="ECO:0007669"/>
    <property type="project" value="InterPro"/>
</dbReference>
<dbReference type="GO" id="GO:0051117">
    <property type="term" value="F:ATPase binding"/>
    <property type="evidence" value="ECO:0007669"/>
    <property type="project" value="TreeGrafter"/>
</dbReference>
<dbReference type="GO" id="GO:0004252">
    <property type="term" value="F:serine-type endopeptidase activity"/>
    <property type="evidence" value="ECO:0007669"/>
    <property type="project" value="UniProtKB-UniRule"/>
</dbReference>
<dbReference type="GO" id="GO:0006515">
    <property type="term" value="P:protein quality control for misfolded or incompletely synthesized proteins"/>
    <property type="evidence" value="ECO:0007669"/>
    <property type="project" value="TreeGrafter"/>
</dbReference>
<dbReference type="CDD" id="cd07017">
    <property type="entry name" value="S14_ClpP_2"/>
    <property type="match status" value="1"/>
</dbReference>
<dbReference type="FunFam" id="3.90.226.10:FF:000001">
    <property type="entry name" value="ATP-dependent Clp protease proteolytic subunit"/>
    <property type="match status" value="1"/>
</dbReference>
<dbReference type="Gene3D" id="3.90.226.10">
    <property type="entry name" value="2-enoyl-CoA Hydratase, Chain A, domain 1"/>
    <property type="match status" value="1"/>
</dbReference>
<dbReference type="HAMAP" id="MF_00444">
    <property type="entry name" value="ClpP"/>
    <property type="match status" value="1"/>
</dbReference>
<dbReference type="InterPro" id="IPR001907">
    <property type="entry name" value="ClpP"/>
</dbReference>
<dbReference type="InterPro" id="IPR029045">
    <property type="entry name" value="ClpP/crotonase-like_dom_sf"/>
</dbReference>
<dbReference type="InterPro" id="IPR023562">
    <property type="entry name" value="ClpP/TepA"/>
</dbReference>
<dbReference type="InterPro" id="IPR033135">
    <property type="entry name" value="ClpP_His_AS"/>
</dbReference>
<dbReference type="InterPro" id="IPR018215">
    <property type="entry name" value="ClpP_Ser_AS"/>
</dbReference>
<dbReference type="NCBIfam" id="TIGR00493">
    <property type="entry name" value="clpP"/>
    <property type="match status" value="1"/>
</dbReference>
<dbReference type="NCBIfam" id="NF001368">
    <property type="entry name" value="PRK00277.1"/>
    <property type="match status" value="1"/>
</dbReference>
<dbReference type="NCBIfam" id="NF009205">
    <property type="entry name" value="PRK12553.1"/>
    <property type="match status" value="1"/>
</dbReference>
<dbReference type="PANTHER" id="PTHR10381">
    <property type="entry name" value="ATP-DEPENDENT CLP PROTEASE PROTEOLYTIC SUBUNIT"/>
    <property type="match status" value="1"/>
</dbReference>
<dbReference type="PANTHER" id="PTHR10381:SF70">
    <property type="entry name" value="ATP-DEPENDENT CLP PROTEASE PROTEOLYTIC SUBUNIT"/>
    <property type="match status" value="1"/>
</dbReference>
<dbReference type="Pfam" id="PF00574">
    <property type="entry name" value="CLP_protease"/>
    <property type="match status" value="1"/>
</dbReference>
<dbReference type="PRINTS" id="PR00127">
    <property type="entry name" value="CLPPROTEASEP"/>
</dbReference>
<dbReference type="SUPFAM" id="SSF52096">
    <property type="entry name" value="ClpP/crotonase"/>
    <property type="match status" value="1"/>
</dbReference>
<dbReference type="PROSITE" id="PS00382">
    <property type="entry name" value="CLP_PROTEASE_HIS"/>
    <property type="match status" value="1"/>
</dbReference>
<dbReference type="PROSITE" id="PS00381">
    <property type="entry name" value="CLP_PROTEASE_SER"/>
    <property type="match status" value="1"/>
</dbReference>
<reference key="1">
    <citation type="journal article" date="2005" name="Nucleic Acids Res.">
        <title>The genome sequence of Xanthomonas oryzae pathovar oryzae KACC10331, the bacterial blight pathogen of rice.</title>
        <authorList>
            <person name="Lee B.-M."/>
            <person name="Park Y.-J."/>
            <person name="Park D.-S."/>
            <person name="Kang H.-W."/>
            <person name="Kim J.-G."/>
            <person name="Song E.-S."/>
            <person name="Park I.-C."/>
            <person name="Yoon U.-H."/>
            <person name="Hahn J.-H."/>
            <person name="Koo B.-S."/>
            <person name="Lee G.-B."/>
            <person name="Kim H."/>
            <person name="Park H.-S."/>
            <person name="Yoon K.-O."/>
            <person name="Kim J.-H."/>
            <person name="Jung C.-H."/>
            <person name="Koh N.-H."/>
            <person name="Seo J.-S."/>
            <person name="Go S.-J."/>
        </authorList>
    </citation>
    <scope>NUCLEOTIDE SEQUENCE [LARGE SCALE GENOMIC DNA]</scope>
    <source>
        <strain>KACC10331 / KXO85</strain>
    </source>
</reference>